<organism>
    <name type="scientific">Haemophilus influenzae</name>
    <dbReference type="NCBI Taxonomy" id="727"/>
    <lineage>
        <taxon>Bacteria</taxon>
        <taxon>Pseudomonadati</taxon>
        <taxon>Pseudomonadota</taxon>
        <taxon>Gammaproteobacteria</taxon>
        <taxon>Pasteurellales</taxon>
        <taxon>Pasteurellaceae</taxon>
        <taxon>Haemophilus</taxon>
    </lineage>
</organism>
<reference key="1">
    <citation type="journal article" date="1994" name="Mol. Microbiol.">
        <title>Antigenic drift of non-encapsulated Haemophilus influenzae major outer membrane protein P2 in patients with chronic bronchitis is caused by point mutations.</title>
        <authorList>
            <person name="Duim B."/>
            <person name="van Alphen L."/>
            <person name="Eijk P."/>
            <person name="Jansen H.M."/>
            <person name="Dankert J."/>
        </authorList>
    </citation>
    <scope>NUCLEOTIDE SEQUENCE [GENOMIC DNA]</scope>
    <source>
        <strain>T1</strain>
        <strain>T2</strain>
    </source>
</reference>
<reference key="2">
    <citation type="journal article" date="1993" name="Microb. Pathog.">
        <title>Genetic analysis of the diversity in outer membrane protein P2 of non-encapsulated Haemophilus influenzae.</title>
        <authorList>
            <person name="Duim B."/>
            <person name="Dankert J."/>
            <person name="Jansen H.M."/>
            <person name="van Alphen L."/>
        </authorList>
    </citation>
    <scope>NUCLEOTIDE SEQUENCE [GENOMIC DNA]</scope>
    <source>
        <strain>T1</strain>
        <strain>T2</strain>
    </source>
</reference>
<comment type="function">
    <text evidence="1">Forms pores that allow passive diffusion of small molecules across the outer membrane.</text>
</comment>
<comment type="subunit">
    <text evidence="1">Homotrimer.</text>
</comment>
<comment type="subcellular location">
    <subcellularLocation>
        <location>Cell outer membrane</location>
        <topology>Multi-pass membrane protein</topology>
    </subcellularLocation>
</comment>
<comment type="miscellaneous">
    <text>The sequence of strain T1 is shown here.</text>
</comment>
<comment type="similarity">
    <text evidence="2">Belongs to the Gram-negative porin family.</text>
</comment>
<proteinExistence type="inferred from homology"/>
<name>OPP25_HAEIF</name>
<keyword id="KW-0998">Cell outer membrane</keyword>
<keyword id="KW-0406">Ion transport</keyword>
<keyword id="KW-0472">Membrane</keyword>
<keyword id="KW-0626">Porin</keyword>
<keyword id="KW-0732">Signal</keyword>
<keyword id="KW-0812">Transmembrane</keyword>
<keyword id="KW-1134">Transmembrane beta strand</keyword>
<keyword id="KW-0813">Transport</keyword>
<gene>
    <name type="primary">ompP2</name>
</gene>
<protein>
    <recommendedName>
        <fullName>Outer membrane protein P2</fullName>
        <shortName>OMP P2</shortName>
    </recommendedName>
</protein>
<accession>P46027</accession>
<evidence type="ECO:0000250" key="1"/>
<evidence type="ECO:0000305" key="2"/>
<feature type="signal peptide">
    <location>
        <begin position="1"/>
        <end position="20"/>
    </location>
</feature>
<feature type="chain" id="PRO_0000025262" description="Outer membrane protein P2">
    <location>
        <begin position="21"/>
        <end position="371"/>
    </location>
</feature>
<feature type="sequence variant" description="In strain: T2.">
    <original>K</original>
    <variation>Q</variation>
    <location>
        <position position="184"/>
    </location>
</feature>
<feature type="sequence variant" description="In strain: T2.">
    <original>A</original>
    <variation>T</variation>
    <location>
        <position position="224"/>
    </location>
</feature>
<feature type="sequence variant" description="In strain: T2.">
    <original>S</original>
    <variation>T</variation>
    <location>
        <position position="273"/>
    </location>
</feature>
<dbReference type="EMBL" id="X73386">
    <property type="protein sequence ID" value="CAA51803.1"/>
    <property type="molecule type" value="Genomic_DNA"/>
</dbReference>
<dbReference type="EMBL" id="X73383">
    <property type="protein sequence ID" value="CAA51800.1"/>
    <property type="molecule type" value="Genomic_DNA"/>
</dbReference>
<dbReference type="PIR" id="S68069">
    <property type="entry name" value="S68069"/>
</dbReference>
<dbReference type="PIR" id="S68072">
    <property type="entry name" value="S68072"/>
</dbReference>
<dbReference type="SMR" id="P46027"/>
<dbReference type="TCDB" id="1.B.1.3.1">
    <property type="family name" value="the general bacterial porin (gbp) family"/>
</dbReference>
<dbReference type="GO" id="GO:0009279">
    <property type="term" value="C:cell outer membrane"/>
    <property type="evidence" value="ECO:0007669"/>
    <property type="project" value="UniProtKB-SubCell"/>
</dbReference>
<dbReference type="GO" id="GO:0046930">
    <property type="term" value="C:pore complex"/>
    <property type="evidence" value="ECO:0007669"/>
    <property type="project" value="UniProtKB-KW"/>
</dbReference>
<dbReference type="GO" id="GO:0015288">
    <property type="term" value="F:porin activity"/>
    <property type="evidence" value="ECO:0007669"/>
    <property type="project" value="UniProtKB-KW"/>
</dbReference>
<dbReference type="GO" id="GO:0006811">
    <property type="term" value="P:monoatomic ion transport"/>
    <property type="evidence" value="ECO:0007669"/>
    <property type="project" value="UniProtKB-KW"/>
</dbReference>
<dbReference type="CDD" id="cd00342">
    <property type="entry name" value="gram_neg_porins"/>
    <property type="match status" value="1"/>
</dbReference>
<dbReference type="Gene3D" id="2.40.160.10">
    <property type="entry name" value="Porin"/>
    <property type="match status" value="1"/>
</dbReference>
<dbReference type="InterPro" id="IPR050298">
    <property type="entry name" value="Gram-neg_bact_OMP"/>
</dbReference>
<dbReference type="InterPro" id="IPR033900">
    <property type="entry name" value="Gram_neg_porin_domain"/>
</dbReference>
<dbReference type="InterPro" id="IPR023614">
    <property type="entry name" value="Porin_dom_sf"/>
</dbReference>
<dbReference type="PANTHER" id="PTHR34501:SF2">
    <property type="entry name" value="OUTER MEMBRANE PORIN F-RELATED"/>
    <property type="match status" value="1"/>
</dbReference>
<dbReference type="PANTHER" id="PTHR34501">
    <property type="entry name" value="PROTEIN YDDL-RELATED"/>
    <property type="match status" value="1"/>
</dbReference>
<dbReference type="Pfam" id="PF13609">
    <property type="entry name" value="Porin_4"/>
    <property type="match status" value="1"/>
</dbReference>
<dbReference type="SUPFAM" id="SSF56935">
    <property type="entry name" value="Porins"/>
    <property type="match status" value="1"/>
</dbReference>
<sequence>MKKTLAALIVGAFAASAANAAVVYNNEGSKVELGGRLSVIAEQSNNTVDDQKQQHGALRNQGSRFHIKATHNFGDGFYAQGYLETRFISHYQDNADHFDDITTKYAYVTLGNKAFGEVKLGRAKTIADDITSAEDKEYGVLNNSKYIRTNGNTVGYTFKGIDGLVLGANYLLAQARDTANPGKKGEVAAQSISNGVQVGAKYDANNIVAGIAYGRTNYRKNIIAPKQNLGRKDQVEGVLSTLGYHFSDLGLLVSLDSGYAKTKYYEQQQQQRSSPTKPRYDEKRYFVSPGFQYELMEDTNVYGNFKYERTSSDEGKKTREQAVLFGVDHKLHKQVLTYIEGAYARTKTNGKGKAETTGKEKSVGVGLRVYF</sequence>